<feature type="signal peptide" evidence="2">
    <location>
        <begin position="1"/>
        <end position="27"/>
    </location>
</feature>
<feature type="peptide" id="PRO_0000289811" description="Beta-defensin 105A">
    <location>
        <begin position="28"/>
        <end position="78"/>
    </location>
</feature>
<feature type="disulfide bond" evidence="1">
    <location>
        <begin position="43"/>
        <end position="74"/>
    </location>
</feature>
<feature type="disulfide bond" evidence="1">
    <location>
        <begin position="53"/>
        <end position="67"/>
    </location>
</feature>
<feature type="disulfide bond" evidence="1">
    <location>
        <begin position="57"/>
        <end position="73"/>
    </location>
</feature>
<protein>
    <recommendedName>
        <fullName>Beta-defensin 105A</fullName>
    </recommendedName>
    <alternativeName>
        <fullName>Defensin, beta 105</fullName>
    </alternativeName>
    <alternativeName>
        <fullName>Defensin, beta 105A</fullName>
    </alternativeName>
</protein>
<comment type="function">
    <text evidence="1">Has antimicrobial activity.</text>
</comment>
<comment type="subcellular location">
    <subcellularLocation>
        <location evidence="1">Secreted</location>
    </subcellularLocation>
</comment>
<comment type="similarity">
    <text evidence="3">Belongs to the beta-defensin family.</text>
</comment>
<keyword id="KW-0044">Antibiotic</keyword>
<keyword id="KW-0929">Antimicrobial</keyword>
<keyword id="KW-0211">Defensin</keyword>
<keyword id="KW-1015">Disulfide bond</keyword>
<keyword id="KW-1185">Reference proteome</keyword>
<keyword id="KW-0964">Secreted</keyword>
<keyword id="KW-0732">Signal</keyword>
<reference key="1">
    <citation type="submission" date="2006-11" db="EMBL/GenBank/DDBJ databases">
        <title>Evolution and sequence variation of human beta-defensin genes.</title>
        <authorList>
            <person name="Hollox E.J."/>
            <person name="Armour J.A.L."/>
        </authorList>
    </citation>
    <scope>NUCLEOTIDE SEQUENCE [GENOMIC DNA]</scope>
</reference>
<proteinExistence type="inferred from homology"/>
<sequence>MALIRKTFYFLFAVFFILVQLPSGCQAGLDFSQPFPSGEFAVCESCKLGRGKCRKECLENEKPDGNCRLNFLCCRQRI</sequence>
<accession>A4H206</accession>
<name>D105A_GORGO</name>
<evidence type="ECO:0000250" key="1"/>
<evidence type="ECO:0000255" key="2"/>
<evidence type="ECO:0000305" key="3"/>
<organism>
    <name type="scientific">Gorilla gorilla gorilla</name>
    <name type="common">Western lowland gorilla</name>
    <dbReference type="NCBI Taxonomy" id="9595"/>
    <lineage>
        <taxon>Eukaryota</taxon>
        <taxon>Metazoa</taxon>
        <taxon>Chordata</taxon>
        <taxon>Craniata</taxon>
        <taxon>Vertebrata</taxon>
        <taxon>Euteleostomi</taxon>
        <taxon>Mammalia</taxon>
        <taxon>Eutheria</taxon>
        <taxon>Euarchontoglires</taxon>
        <taxon>Primates</taxon>
        <taxon>Haplorrhini</taxon>
        <taxon>Catarrhini</taxon>
        <taxon>Hominidae</taxon>
        <taxon>Gorilla</taxon>
    </lineage>
</organism>
<dbReference type="EMBL" id="AM410111">
    <property type="protein sequence ID" value="CAL68926.1"/>
    <property type="molecule type" value="Genomic_DNA"/>
</dbReference>
<dbReference type="SMR" id="A4H206"/>
<dbReference type="FunCoup" id="A4H206">
    <property type="interactions" value="1"/>
</dbReference>
<dbReference type="STRING" id="9593.ENSGGOP00000006867"/>
<dbReference type="Ensembl" id="ENSGGOT00000007048.3">
    <property type="protein sequence ID" value="ENSGGOP00000006867.2"/>
    <property type="gene ID" value="ENSGGOG00000007021.3"/>
</dbReference>
<dbReference type="GeneID" id="101127763"/>
<dbReference type="KEGG" id="ggo:101127763"/>
<dbReference type="eggNOG" id="ENOG502TE24">
    <property type="taxonomic scope" value="Eukaryota"/>
</dbReference>
<dbReference type="GeneTree" id="ENSGT00390000002317"/>
<dbReference type="HOGENOM" id="CLU_197691_0_0_1"/>
<dbReference type="InParanoid" id="A4H206"/>
<dbReference type="OMA" id="CRRMCLE"/>
<dbReference type="OrthoDB" id="10366at9604"/>
<dbReference type="Proteomes" id="UP000001519">
    <property type="component" value="Chromosome 8"/>
</dbReference>
<dbReference type="GO" id="GO:0005576">
    <property type="term" value="C:extracellular region"/>
    <property type="evidence" value="ECO:0007669"/>
    <property type="project" value="UniProtKB-SubCell"/>
</dbReference>
<dbReference type="GO" id="GO:0042742">
    <property type="term" value="P:defense response to bacterium"/>
    <property type="evidence" value="ECO:0007669"/>
    <property type="project" value="UniProtKB-KW"/>
</dbReference>
<dbReference type="GO" id="GO:0045087">
    <property type="term" value="P:innate immune response"/>
    <property type="evidence" value="ECO:0007669"/>
    <property type="project" value="InterPro"/>
</dbReference>
<dbReference type="InterPro" id="IPR025933">
    <property type="entry name" value="Beta_defensin_dom"/>
</dbReference>
<dbReference type="Pfam" id="PF13841">
    <property type="entry name" value="Defensin_beta_2"/>
    <property type="match status" value="1"/>
</dbReference>
<gene>
    <name type="primary">DEFB105A</name>
    <name type="synonym">DEFB105</name>
</gene>